<organism>
    <name type="scientific">Helicobacter hepaticus (strain ATCC 51449 / 3B1)</name>
    <dbReference type="NCBI Taxonomy" id="235279"/>
    <lineage>
        <taxon>Bacteria</taxon>
        <taxon>Pseudomonadati</taxon>
        <taxon>Campylobacterota</taxon>
        <taxon>Epsilonproteobacteria</taxon>
        <taxon>Campylobacterales</taxon>
        <taxon>Helicobacteraceae</taxon>
        <taxon>Helicobacter</taxon>
    </lineage>
</organism>
<proteinExistence type="inferred from homology"/>
<comment type="function">
    <text evidence="2">GTP hydrolase that promotes the GTP-dependent binding of aminoacyl-tRNA to the A-site of ribosomes during protein biosynthesis.</text>
</comment>
<comment type="catalytic activity">
    <reaction evidence="2">
        <text>GTP + H2O = GDP + phosphate + H(+)</text>
        <dbReference type="Rhea" id="RHEA:19669"/>
        <dbReference type="ChEBI" id="CHEBI:15377"/>
        <dbReference type="ChEBI" id="CHEBI:15378"/>
        <dbReference type="ChEBI" id="CHEBI:37565"/>
        <dbReference type="ChEBI" id="CHEBI:43474"/>
        <dbReference type="ChEBI" id="CHEBI:58189"/>
        <dbReference type="EC" id="3.6.5.3"/>
    </reaction>
    <physiologicalReaction direction="left-to-right" evidence="2">
        <dbReference type="Rhea" id="RHEA:19670"/>
    </physiologicalReaction>
</comment>
<comment type="subunit">
    <text evidence="2">Monomer.</text>
</comment>
<comment type="subcellular location">
    <subcellularLocation>
        <location evidence="2">Cytoplasm</location>
    </subcellularLocation>
</comment>
<comment type="similarity">
    <text evidence="2">Belongs to the TRAFAC class translation factor GTPase superfamily. Classic translation factor GTPase family. EF-Tu/EF-1A subfamily.</text>
</comment>
<evidence type="ECO:0000250" key="1"/>
<evidence type="ECO:0000255" key="2">
    <source>
        <dbReference type="HAMAP-Rule" id="MF_00118"/>
    </source>
</evidence>
<name>EFTU_HELHP</name>
<protein>
    <recommendedName>
        <fullName evidence="2">Elongation factor Tu</fullName>
        <shortName evidence="2">EF-Tu</shortName>
        <ecNumber evidence="2">3.6.5.3</ecNumber>
    </recommendedName>
</protein>
<feature type="chain" id="PRO_1000015673" description="Elongation factor Tu">
    <location>
        <begin position="1"/>
        <end position="399"/>
    </location>
</feature>
<feature type="domain" description="tr-type G">
    <location>
        <begin position="10"/>
        <end position="209"/>
    </location>
</feature>
<feature type="region of interest" description="G1" evidence="1">
    <location>
        <begin position="19"/>
        <end position="26"/>
    </location>
</feature>
<feature type="region of interest" description="G2" evidence="1">
    <location>
        <begin position="60"/>
        <end position="64"/>
    </location>
</feature>
<feature type="region of interest" description="G3" evidence="1">
    <location>
        <begin position="81"/>
        <end position="84"/>
    </location>
</feature>
<feature type="region of interest" description="G4" evidence="1">
    <location>
        <begin position="136"/>
        <end position="139"/>
    </location>
</feature>
<feature type="region of interest" description="G5" evidence="1">
    <location>
        <begin position="174"/>
        <end position="176"/>
    </location>
</feature>
<feature type="binding site" evidence="2">
    <location>
        <begin position="19"/>
        <end position="26"/>
    </location>
    <ligand>
        <name>GTP</name>
        <dbReference type="ChEBI" id="CHEBI:37565"/>
    </ligand>
</feature>
<feature type="binding site" evidence="2">
    <location>
        <position position="26"/>
    </location>
    <ligand>
        <name>Mg(2+)</name>
        <dbReference type="ChEBI" id="CHEBI:18420"/>
    </ligand>
</feature>
<feature type="binding site" evidence="2">
    <location>
        <begin position="81"/>
        <end position="85"/>
    </location>
    <ligand>
        <name>GTP</name>
        <dbReference type="ChEBI" id="CHEBI:37565"/>
    </ligand>
</feature>
<feature type="binding site" evidence="2">
    <location>
        <begin position="136"/>
        <end position="139"/>
    </location>
    <ligand>
        <name>GTP</name>
        <dbReference type="ChEBI" id="CHEBI:37565"/>
    </ligand>
</feature>
<reference key="1">
    <citation type="journal article" date="2003" name="Proc. Natl. Acad. Sci. U.S.A.">
        <title>The complete genome sequence of the carcinogenic bacterium Helicobacter hepaticus.</title>
        <authorList>
            <person name="Suerbaum S."/>
            <person name="Josenhans C."/>
            <person name="Sterzenbach T."/>
            <person name="Drescher B."/>
            <person name="Brandt P."/>
            <person name="Bell M."/>
            <person name="Droege M."/>
            <person name="Fartmann B."/>
            <person name="Fischer H.-P."/>
            <person name="Ge Z."/>
            <person name="Hoerster A."/>
            <person name="Holland R."/>
            <person name="Klein K."/>
            <person name="Koenig J."/>
            <person name="Macko L."/>
            <person name="Mendz G.L."/>
            <person name="Nyakatura G."/>
            <person name="Schauer D.B."/>
            <person name="Shen Z."/>
            <person name="Weber J."/>
            <person name="Frosch M."/>
            <person name="Fox J.G."/>
        </authorList>
    </citation>
    <scope>NUCLEOTIDE SEQUENCE [LARGE SCALE GENOMIC DNA]</scope>
    <source>
        <strain>ATCC 51449 / 3B1</strain>
    </source>
</reference>
<keyword id="KW-0963">Cytoplasm</keyword>
<keyword id="KW-0251">Elongation factor</keyword>
<keyword id="KW-0342">GTP-binding</keyword>
<keyword id="KW-0378">Hydrolase</keyword>
<keyword id="KW-0460">Magnesium</keyword>
<keyword id="KW-0479">Metal-binding</keyword>
<keyword id="KW-0547">Nucleotide-binding</keyword>
<keyword id="KW-0648">Protein biosynthesis</keyword>
<keyword id="KW-1185">Reference proteome</keyword>
<gene>
    <name evidence="2" type="primary">tuf</name>
    <name type="ordered locus">HH_0369</name>
</gene>
<accession>Q7VJ74</accession>
<sequence>MAKEKFVKNKPHVNVGTIGHVDHGKTTLSAAISAVLATKGLAELKDYDNIDNAPEEKERGITIATSHIEYETENRHYAHVDCPGHADYVKNMITGAAQMDGAILVVSAADGPMPQTREHILLSRQVGVHYIVVFLNKQDMVDDAELLELVEMEVRELLSQYDFPGDDTPIIAGSALKALEEAKAGNVGEWGEKVLKLMEEVDKYIPTPQRDTEKTFLMPVEDVFSIAGRGTVVTGRVERGVVQVGDEVEIVGIRDTQKTTVTGVEMFRKELDKGEAGDNVGILLRGTKKEEVERGMVLCKPGSITPHKKFEGEIYVLSKDEGGRHTPFFNGYRPQFYVRTTDVTGSIELPSGVEMVMPGDNVKITVELIAPVALEDGTRFAIREGGRTVGSGVVTKIIE</sequence>
<dbReference type="EC" id="3.6.5.3" evidence="2"/>
<dbReference type="EMBL" id="AE017125">
    <property type="protein sequence ID" value="AAP76966.1"/>
    <property type="molecule type" value="Genomic_DNA"/>
</dbReference>
<dbReference type="RefSeq" id="WP_011115211.1">
    <property type="nucleotide sequence ID" value="NC_004917.1"/>
</dbReference>
<dbReference type="SMR" id="Q7VJ74"/>
<dbReference type="STRING" id="235279.HH_0369"/>
<dbReference type="KEGG" id="hhe:HH_0369"/>
<dbReference type="eggNOG" id="COG0050">
    <property type="taxonomic scope" value="Bacteria"/>
</dbReference>
<dbReference type="HOGENOM" id="CLU_007265_0_1_7"/>
<dbReference type="OrthoDB" id="9803139at2"/>
<dbReference type="Proteomes" id="UP000002495">
    <property type="component" value="Chromosome"/>
</dbReference>
<dbReference type="GO" id="GO:0005829">
    <property type="term" value="C:cytosol"/>
    <property type="evidence" value="ECO:0007669"/>
    <property type="project" value="TreeGrafter"/>
</dbReference>
<dbReference type="GO" id="GO:0005525">
    <property type="term" value="F:GTP binding"/>
    <property type="evidence" value="ECO:0007669"/>
    <property type="project" value="UniProtKB-UniRule"/>
</dbReference>
<dbReference type="GO" id="GO:0003924">
    <property type="term" value="F:GTPase activity"/>
    <property type="evidence" value="ECO:0007669"/>
    <property type="project" value="InterPro"/>
</dbReference>
<dbReference type="GO" id="GO:0003746">
    <property type="term" value="F:translation elongation factor activity"/>
    <property type="evidence" value="ECO:0007669"/>
    <property type="project" value="UniProtKB-UniRule"/>
</dbReference>
<dbReference type="CDD" id="cd01884">
    <property type="entry name" value="EF_Tu"/>
    <property type="match status" value="1"/>
</dbReference>
<dbReference type="CDD" id="cd03697">
    <property type="entry name" value="EFTU_II"/>
    <property type="match status" value="1"/>
</dbReference>
<dbReference type="CDD" id="cd03707">
    <property type="entry name" value="EFTU_III"/>
    <property type="match status" value="1"/>
</dbReference>
<dbReference type="FunFam" id="2.40.30.10:FF:000001">
    <property type="entry name" value="Elongation factor Tu"/>
    <property type="match status" value="1"/>
</dbReference>
<dbReference type="FunFam" id="3.40.50.300:FF:000003">
    <property type="entry name" value="Elongation factor Tu"/>
    <property type="match status" value="1"/>
</dbReference>
<dbReference type="Gene3D" id="3.40.50.300">
    <property type="entry name" value="P-loop containing nucleotide triphosphate hydrolases"/>
    <property type="match status" value="1"/>
</dbReference>
<dbReference type="Gene3D" id="2.40.30.10">
    <property type="entry name" value="Translation factors"/>
    <property type="match status" value="2"/>
</dbReference>
<dbReference type="HAMAP" id="MF_00118_B">
    <property type="entry name" value="EF_Tu_B"/>
    <property type="match status" value="1"/>
</dbReference>
<dbReference type="InterPro" id="IPR041709">
    <property type="entry name" value="EF-Tu_GTP-bd"/>
</dbReference>
<dbReference type="InterPro" id="IPR050055">
    <property type="entry name" value="EF-Tu_GTPase"/>
</dbReference>
<dbReference type="InterPro" id="IPR004161">
    <property type="entry name" value="EFTu-like_2"/>
</dbReference>
<dbReference type="InterPro" id="IPR033720">
    <property type="entry name" value="EFTU_2"/>
</dbReference>
<dbReference type="InterPro" id="IPR031157">
    <property type="entry name" value="G_TR_CS"/>
</dbReference>
<dbReference type="InterPro" id="IPR027417">
    <property type="entry name" value="P-loop_NTPase"/>
</dbReference>
<dbReference type="InterPro" id="IPR005225">
    <property type="entry name" value="Small_GTP-bd"/>
</dbReference>
<dbReference type="InterPro" id="IPR000795">
    <property type="entry name" value="T_Tr_GTP-bd_dom"/>
</dbReference>
<dbReference type="InterPro" id="IPR009000">
    <property type="entry name" value="Transl_B-barrel_sf"/>
</dbReference>
<dbReference type="InterPro" id="IPR009001">
    <property type="entry name" value="Transl_elong_EF1A/Init_IF2_C"/>
</dbReference>
<dbReference type="InterPro" id="IPR004541">
    <property type="entry name" value="Transl_elong_EFTu/EF1A_bac/org"/>
</dbReference>
<dbReference type="InterPro" id="IPR004160">
    <property type="entry name" value="Transl_elong_EFTu/EF1A_C"/>
</dbReference>
<dbReference type="NCBIfam" id="TIGR00485">
    <property type="entry name" value="EF-Tu"/>
    <property type="match status" value="1"/>
</dbReference>
<dbReference type="NCBIfam" id="NF000766">
    <property type="entry name" value="PRK00049.1"/>
    <property type="match status" value="1"/>
</dbReference>
<dbReference type="NCBIfam" id="NF009372">
    <property type="entry name" value="PRK12735.1"/>
    <property type="match status" value="1"/>
</dbReference>
<dbReference type="NCBIfam" id="NF009373">
    <property type="entry name" value="PRK12736.1"/>
    <property type="match status" value="1"/>
</dbReference>
<dbReference type="NCBIfam" id="TIGR00231">
    <property type="entry name" value="small_GTP"/>
    <property type="match status" value="1"/>
</dbReference>
<dbReference type="PANTHER" id="PTHR43721:SF22">
    <property type="entry name" value="ELONGATION FACTOR TU, MITOCHONDRIAL"/>
    <property type="match status" value="1"/>
</dbReference>
<dbReference type="PANTHER" id="PTHR43721">
    <property type="entry name" value="ELONGATION FACTOR TU-RELATED"/>
    <property type="match status" value="1"/>
</dbReference>
<dbReference type="Pfam" id="PF00009">
    <property type="entry name" value="GTP_EFTU"/>
    <property type="match status" value="1"/>
</dbReference>
<dbReference type="Pfam" id="PF03144">
    <property type="entry name" value="GTP_EFTU_D2"/>
    <property type="match status" value="1"/>
</dbReference>
<dbReference type="Pfam" id="PF03143">
    <property type="entry name" value="GTP_EFTU_D3"/>
    <property type="match status" value="1"/>
</dbReference>
<dbReference type="PRINTS" id="PR00315">
    <property type="entry name" value="ELONGATNFCT"/>
</dbReference>
<dbReference type="SUPFAM" id="SSF50465">
    <property type="entry name" value="EF-Tu/eEF-1alpha/eIF2-gamma C-terminal domain"/>
    <property type="match status" value="1"/>
</dbReference>
<dbReference type="SUPFAM" id="SSF52540">
    <property type="entry name" value="P-loop containing nucleoside triphosphate hydrolases"/>
    <property type="match status" value="1"/>
</dbReference>
<dbReference type="SUPFAM" id="SSF50447">
    <property type="entry name" value="Translation proteins"/>
    <property type="match status" value="1"/>
</dbReference>
<dbReference type="PROSITE" id="PS00301">
    <property type="entry name" value="G_TR_1"/>
    <property type="match status" value="1"/>
</dbReference>
<dbReference type="PROSITE" id="PS51722">
    <property type="entry name" value="G_TR_2"/>
    <property type="match status" value="1"/>
</dbReference>